<name>NODQ_AZOBR</name>
<reference key="1">
    <citation type="journal article" date="1990" name="Mol. Plant Microbe Interact.">
        <title>Characterization of two Azospirillum brasilense Sp7 plasmid genes homologous to Rhizobium meliloti nodPQ.</title>
        <authorList>
            <person name="Vieille C."/>
            <person name="Elmerich C."/>
        </authorList>
    </citation>
    <scope>NUCLEOTIDE SEQUENCE [GENOMIC DNA]</scope>
    <source>
        <strain>ATCC 29145 / DSM 1690 / IMET 11303 / Sp7</strain>
    </source>
</reference>
<reference key="2">
    <citation type="journal article" date="2004" name="FEMS Microbiol. Lett.">
        <title>Annotation of the pRhico plasmid of Azospirillum brasilense reveals its role in determining the outer surface composition.</title>
        <authorList>
            <person name="Vanbleu E."/>
            <person name="Marchal K."/>
            <person name="Lambrecht M."/>
            <person name="Mathys J."/>
            <person name="Vanderleyden J."/>
        </authorList>
    </citation>
    <scope>NUCLEOTIDE SEQUENCE [GENOMIC DNA]</scope>
    <source>
        <strain>ATCC 29145 / DSM 1690 / IMET 11303 / Sp7</strain>
    </source>
</reference>
<protein>
    <recommendedName>
        <fullName>Bifunctional enzyme NodQ</fullName>
    </recommendedName>
    <alternativeName>
        <fullName>Nodulation protein Q</fullName>
    </alternativeName>
    <domain>
        <recommendedName>
            <fullName>Sulfate adenylyltransferase subunit 1</fullName>
            <ecNumber>2.7.7.4</ecNumber>
        </recommendedName>
        <alternativeName>
            <fullName>ATP-sulfurylase large subunit</fullName>
        </alternativeName>
        <alternativeName>
            <fullName>Sulfate adenylate transferase</fullName>
            <shortName>SAT</shortName>
        </alternativeName>
    </domain>
    <domain>
        <recommendedName>
            <fullName>Adenylyl-sulfate kinase</fullName>
            <ecNumber>2.7.1.25</ecNumber>
        </recommendedName>
        <alternativeName>
            <fullName>APS kinase</fullName>
        </alternativeName>
        <alternativeName>
            <fullName>ATP adenosine-5'-phosphosulfate 3'-phosphotransferase</fullName>
        </alternativeName>
    </domain>
</protein>
<evidence type="ECO:0000250" key="1"/>
<evidence type="ECO:0000255" key="2"/>
<evidence type="ECO:0000305" key="3"/>
<keyword id="KW-0067">ATP-binding</keyword>
<keyword id="KW-0342">GTP-binding</keyword>
<keyword id="KW-0418">Kinase</keyword>
<keyword id="KW-0511">Multifunctional enzyme</keyword>
<keyword id="KW-0536">Nodulation</keyword>
<keyword id="KW-0547">Nucleotide-binding</keyword>
<keyword id="KW-0548">Nucleotidyltransferase</keyword>
<keyword id="KW-0614">Plasmid</keyword>
<keyword id="KW-0808">Transferase</keyword>
<gene>
    <name type="primary">nodQ</name>
    <name type="ORF">pRhico026</name>
</gene>
<geneLocation type="plasmid">
    <name>pRhico</name>
    <name>90-MDa megaplasmid</name>
</geneLocation>
<accession>P28604</accession>
<accession>Q6QW77</accession>
<organism>
    <name type="scientific">Azospirillum brasilense</name>
    <dbReference type="NCBI Taxonomy" id="192"/>
    <lineage>
        <taxon>Bacteria</taxon>
        <taxon>Pseudomonadati</taxon>
        <taxon>Pseudomonadota</taxon>
        <taxon>Alphaproteobacteria</taxon>
        <taxon>Rhodospirillales</taxon>
        <taxon>Azospirillaceae</taxon>
        <taxon>Azospirillum</taxon>
    </lineage>
</organism>
<feature type="chain" id="PRO_0000091541" description="Bifunctional enzyme NodQ">
    <location>
        <begin position="1"/>
        <end position="620"/>
    </location>
</feature>
<feature type="domain" description="tr-type G">
    <location>
        <begin position="7"/>
        <end position="223"/>
    </location>
</feature>
<feature type="region of interest" description="Sulfate adenylyltransferase">
    <location>
        <begin position="1"/>
        <end position="444"/>
    </location>
</feature>
<feature type="region of interest" description="G1" evidence="1">
    <location>
        <begin position="16"/>
        <end position="23"/>
    </location>
</feature>
<feature type="region of interest" description="G2" evidence="1">
    <location>
        <begin position="74"/>
        <end position="78"/>
    </location>
</feature>
<feature type="region of interest" description="G3" evidence="1">
    <location>
        <begin position="95"/>
        <end position="98"/>
    </location>
</feature>
<feature type="region of interest" description="G4" evidence="1">
    <location>
        <begin position="150"/>
        <end position="153"/>
    </location>
</feature>
<feature type="region of interest" description="G5" evidence="1">
    <location>
        <begin position="187"/>
        <end position="189"/>
    </location>
</feature>
<feature type="region of interest" description="Adenylyl-sulfate kinase">
    <location>
        <begin position="445"/>
        <end position="620"/>
    </location>
</feature>
<feature type="binding site" evidence="1">
    <location>
        <begin position="16"/>
        <end position="23"/>
    </location>
    <ligand>
        <name>GTP</name>
        <dbReference type="ChEBI" id="CHEBI:37565"/>
    </ligand>
</feature>
<feature type="binding site" evidence="1">
    <location>
        <begin position="95"/>
        <end position="99"/>
    </location>
    <ligand>
        <name>GTP</name>
        <dbReference type="ChEBI" id="CHEBI:37565"/>
    </ligand>
</feature>
<feature type="binding site" evidence="1">
    <location>
        <begin position="150"/>
        <end position="153"/>
    </location>
    <ligand>
        <name>GTP</name>
        <dbReference type="ChEBI" id="CHEBI:37565"/>
    </ligand>
</feature>
<feature type="binding site" evidence="2">
    <location>
        <begin position="453"/>
        <end position="460"/>
    </location>
    <ligand>
        <name>ATP</name>
        <dbReference type="ChEBI" id="CHEBI:30616"/>
    </ligand>
</feature>
<feature type="sequence conflict" description="In Ref. 1; AAA22186." evidence="3" ref="1">
    <original>A</original>
    <variation>R</variation>
    <location>
        <position position="113"/>
    </location>
</feature>
<comment type="function">
    <text evidence="1">Proposed to provide activated sulfate for transfer to Nod factor. ATP sulfurylase may be the GTPase, regulating ATP sulfurylase activity (By similarity).</text>
</comment>
<comment type="function">
    <text evidence="1">APS kinase catalyzes the synthesis of activated sulfate.</text>
</comment>
<comment type="catalytic activity">
    <reaction>
        <text>sulfate + ATP + H(+) = adenosine 5'-phosphosulfate + diphosphate</text>
        <dbReference type="Rhea" id="RHEA:18133"/>
        <dbReference type="ChEBI" id="CHEBI:15378"/>
        <dbReference type="ChEBI" id="CHEBI:16189"/>
        <dbReference type="ChEBI" id="CHEBI:30616"/>
        <dbReference type="ChEBI" id="CHEBI:33019"/>
        <dbReference type="ChEBI" id="CHEBI:58243"/>
        <dbReference type="EC" id="2.7.7.4"/>
    </reaction>
</comment>
<comment type="catalytic activity">
    <reaction>
        <text>adenosine 5'-phosphosulfate + ATP = 3'-phosphoadenylyl sulfate + ADP + H(+)</text>
        <dbReference type="Rhea" id="RHEA:24152"/>
        <dbReference type="ChEBI" id="CHEBI:15378"/>
        <dbReference type="ChEBI" id="CHEBI:30616"/>
        <dbReference type="ChEBI" id="CHEBI:58243"/>
        <dbReference type="ChEBI" id="CHEBI:58339"/>
        <dbReference type="ChEBI" id="CHEBI:456216"/>
        <dbReference type="EC" id="2.7.1.25"/>
    </reaction>
</comment>
<comment type="subunit">
    <text evidence="3">Sulfate-activating enzymes, NodP and NodQ, may be physically associated.</text>
</comment>
<comment type="similarity">
    <text evidence="3">In the C-terminal section; belongs to the APS kinase family.</text>
</comment>
<comment type="similarity">
    <text evidence="3">In the N-terminal section; belongs to the TRAFAC class translation factor GTPase superfamily. Classic translation factor GTPase family. CysN/NodQ subfamily.</text>
</comment>
<comment type="caution">
    <text evidence="3">It is not obvious if the APS kinase domain is functional; the conserved active site serine (position 527) is replaced by an alanine.</text>
</comment>
<proteinExistence type="inferred from homology"/>
<sequence>METGTGRGLLRFLTCGSVDDGKSTLIGRLLHDAGLISDDQLEQARRDSRGRAEEDGGIDFSLLVDGLEAEREQSITIDVAYRYFATDRRSFIVADAPGHEQYTRNMATAASGASLAVLLVDARKGLLTQTRRHAIVASLMGIRHVVLAVNKMDLVEDGETVFAAIRQAFTVFSAPLGFRSVTAIPLSARHGDNVVHRSAAMPWHHGPTLLGHLETAAAEDDPTEDGPLRFLVEWVNRPNLDFRGLSGTLLSGSLETGGAVTVWPSGRSARIARIVTFDGDVTQARAGDAVTVTLDAAVDAGRGDLLSGPDGAPEVADQFAAHLLWMAEEPLIPGRSYLLRAGARWVPATVTALRHAVNVETLEHGAASVLGLNAVGLCNLSTAAPLAFDPYEASRHTGSFILVDRFSNRTVGAGMIRHPLRRAANLHRQELAVSTVERAALKRQRPAVLWFTGLSGSGKSTIANRVERRLHTLGHHTMMLDGDNVRLGLNRDLGFTDADRVENIRRVGEVAKLMTEAGLIVLCAFIAPFRAEREAVRALLPDGAFLEVFVDTPLDECMRRDPKGLYAKARAGTLRNFTGVDSPYEAPDAPELRLDTTAEDADALAERVVELLHRKGIAEA</sequence>
<dbReference type="EC" id="2.7.7.4"/>
<dbReference type="EC" id="2.7.1.25"/>
<dbReference type="EMBL" id="M94886">
    <property type="protein sequence ID" value="AAA22186.1"/>
    <property type="molecule type" value="Genomic_DNA"/>
</dbReference>
<dbReference type="EMBL" id="AY523973">
    <property type="protein sequence ID" value="AAS83003.1"/>
    <property type="molecule type" value="Genomic_DNA"/>
</dbReference>
<dbReference type="PIR" id="I39755">
    <property type="entry name" value="I39755"/>
</dbReference>
<dbReference type="RefSeq" id="WP_035683262.1">
    <property type="nucleotide sequence ID" value="NZ_CP012919.1"/>
</dbReference>
<dbReference type="SMR" id="P28604"/>
<dbReference type="GeneID" id="56449450"/>
<dbReference type="GO" id="GO:0004020">
    <property type="term" value="F:adenylylsulfate kinase activity"/>
    <property type="evidence" value="ECO:0007669"/>
    <property type="project" value="UniProtKB-UniRule"/>
</dbReference>
<dbReference type="GO" id="GO:0005524">
    <property type="term" value="F:ATP binding"/>
    <property type="evidence" value="ECO:0007669"/>
    <property type="project" value="UniProtKB-UniRule"/>
</dbReference>
<dbReference type="GO" id="GO:0005525">
    <property type="term" value="F:GTP binding"/>
    <property type="evidence" value="ECO:0007669"/>
    <property type="project" value="UniProtKB-UniRule"/>
</dbReference>
<dbReference type="GO" id="GO:0003924">
    <property type="term" value="F:GTPase activity"/>
    <property type="evidence" value="ECO:0007669"/>
    <property type="project" value="InterPro"/>
</dbReference>
<dbReference type="GO" id="GO:0004781">
    <property type="term" value="F:sulfate adenylyltransferase (ATP) activity"/>
    <property type="evidence" value="ECO:0007669"/>
    <property type="project" value="UniProtKB-UniRule"/>
</dbReference>
<dbReference type="GO" id="GO:0070814">
    <property type="term" value="P:hydrogen sulfide biosynthetic process"/>
    <property type="evidence" value="ECO:0007669"/>
    <property type="project" value="UniProtKB-UniRule"/>
</dbReference>
<dbReference type="GO" id="GO:0000103">
    <property type="term" value="P:sulfate assimilation"/>
    <property type="evidence" value="ECO:0007669"/>
    <property type="project" value="UniProtKB-UniRule"/>
</dbReference>
<dbReference type="CDD" id="cd02027">
    <property type="entry name" value="APSK"/>
    <property type="match status" value="1"/>
</dbReference>
<dbReference type="CDD" id="cd04166">
    <property type="entry name" value="CysN_ATPS"/>
    <property type="match status" value="1"/>
</dbReference>
<dbReference type="CDD" id="cd03695">
    <property type="entry name" value="CysN_NodQ_II"/>
    <property type="match status" value="1"/>
</dbReference>
<dbReference type="CDD" id="cd04095">
    <property type="entry name" value="CysN_NoDQ_III"/>
    <property type="match status" value="1"/>
</dbReference>
<dbReference type="FunFam" id="3.40.50.300:FF:000119">
    <property type="entry name" value="Sulfate adenylyltransferase subunit 1"/>
    <property type="match status" value="1"/>
</dbReference>
<dbReference type="Gene3D" id="3.40.50.300">
    <property type="entry name" value="P-loop containing nucleotide triphosphate hydrolases"/>
    <property type="match status" value="2"/>
</dbReference>
<dbReference type="Gene3D" id="2.40.30.10">
    <property type="entry name" value="Translation factors"/>
    <property type="match status" value="2"/>
</dbReference>
<dbReference type="HAMAP" id="MF_00065">
    <property type="entry name" value="Adenylyl_sulf_kinase"/>
    <property type="match status" value="1"/>
</dbReference>
<dbReference type="HAMAP" id="MF_00062">
    <property type="entry name" value="Sulf_adenylyltr_sub1"/>
    <property type="match status" value="1"/>
</dbReference>
<dbReference type="InterPro" id="IPR002891">
    <property type="entry name" value="APS_kinase"/>
</dbReference>
<dbReference type="InterPro" id="IPR041757">
    <property type="entry name" value="CysN_GTP-bd"/>
</dbReference>
<dbReference type="InterPro" id="IPR044138">
    <property type="entry name" value="CysN_II"/>
</dbReference>
<dbReference type="InterPro" id="IPR044139">
    <property type="entry name" value="CysN_NoDQ_III"/>
</dbReference>
<dbReference type="InterPro" id="IPR054696">
    <property type="entry name" value="GTP-eEF1A_C"/>
</dbReference>
<dbReference type="InterPro" id="IPR027417">
    <property type="entry name" value="P-loop_NTPase"/>
</dbReference>
<dbReference type="InterPro" id="IPR011779">
    <property type="entry name" value="SO4_adenylTrfase_lsu"/>
</dbReference>
<dbReference type="InterPro" id="IPR000795">
    <property type="entry name" value="T_Tr_GTP-bd_dom"/>
</dbReference>
<dbReference type="InterPro" id="IPR050100">
    <property type="entry name" value="TRAFAC_GTPase_members"/>
</dbReference>
<dbReference type="InterPro" id="IPR009000">
    <property type="entry name" value="Transl_B-barrel_sf"/>
</dbReference>
<dbReference type="InterPro" id="IPR009001">
    <property type="entry name" value="Transl_elong_EF1A/Init_IF2_C"/>
</dbReference>
<dbReference type="NCBIfam" id="TIGR00455">
    <property type="entry name" value="apsK"/>
    <property type="match status" value="1"/>
</dbReference>
<dbReference type="NCBIfam" id="TIGR02034">
    <property type="entry name" value="CysN"/>
    <property type="match status" value="1"/>
</dbReference>
<dbReference type="NCBIfam" id="NF003013">
    <property type="entry name" value="PRK03846.1"/>
    <property type="match status" value="1"/>
</dbReference>
<dbReference type="NCBIfam" id="NF004035">
    <property type="entry name" value="PRK05506.1"/>
    <property type="match status" value="1"/>
</dbReference>
<dbReference type="PANTHER" id="PTHR23115">
    <property type="entry name" value="TRANSLATION FACTOR"/>
    <property type="match status" value="1"/>
</dbReference>
<dbReference type="Pfam" id="PF01583">
    <property type="entry name" value="APS_kinase"/>
    <property type="match status" value="1"/>
</dbReference>
<dbReference type="Pfam" id="PF22594">
    <property type="entry name" value="GTP-eEF1A_C"/>
    <property type="match status" value="1"/>
</dbReference>
<dbReference type="Pfam" id="PF00009">
    <property type="entry name" value="GTP_EFTU"/>
    <property type="match status" value="1"/>
</dbReference>
<dbReference type="PRINTS" id="PR00315">
    <property type="entry name" value="ELONGATNFCT"/>
</dbReference>
<dbReference type="SUPFAM" id="SSF50465">
    <property type="entry name" value="EF-Tu/eEF-1alpha/eIF2-gamma C-terminal domain"/>
    <property type="match status" value="1"/>
</dbReference>
<dbReference type="SUPFAM" id="SSF52540">
    <property type="entry name" value="P-loop containing nucleoside triphosphate hydrolases"/>
    <property type="match status" value="2"/>
</dbReference>
<dbReference type="SUPFAM" id="SSF50447">
    <property type="entry name" value="Translation proteins"/>
    <property type="match status" value="1"/>
</dbReference>
<dbReference type="PROSITE" id="PS51722">
    <property type="entry name" value="G_TR_2"/>
    <property type="match status" value="1"/>
</dbReference>